<proteinExistence type="inferred from homology"/>
<gene>
    <name evidence="1" type="primary">rpsM</name>
    <name type="ordered locus">DehaBAV1_0476</name>
</gene>
<keyword id="KW-0687">Ribonucleoprotein</keyword>
<keyword id="KW-0689">Ribosomal protein</keyword>
<keyword id="KW-0694">RNA-binding</keyword>
<keyword id="KW-0699">rRNA-binding</keyword>
<keyword id="KW-0820">tRNA-binding</keyword>
<accession>A5FRW9</accession>
<evidence type="ECO:0000255" key="1">
    <source>
        <dbReference type="HAMAP-Rule" id="MF_01315"/>
    </source>
</evidence>
<evidence type="ECO:0000256" key="2">
    <source>
        <dbReference type="SAM" id="MobiDB-lite"/>
    </source>
</evidence>
<evidence type="ECO:0000305" key="3"/>
<organism>
    <name type="scientific">Dehalococcoides mccartyi (strain ATCC BAA-2100 / JCM 16839 / KCTC 5957 / BAV1)</name>
    <dbReference type="NCBI Taxonomy" id="216389"/>
    <lineage>
        <taxon>Bacteria</taxon>
        <taxon>Bacillati</taxon>
        <taxon>Chloroflexota</taxon>
        <taxon>Dehalococcoidia</taxon>
        <taxon>Dehalococcoidales</taxon>
        <taxon>Dehalococcoidaceae</taxon>
        <taxon>Dehalococcoides</taxon>
    </lineage>
</organism>
<reference key="1">
    <citation type="submission" date="2007-05" db="EMBL/GenBank/DDBJ databases">
        <title>Complete sequence of Dehalococcoides sp. BAV1.</title>
        <authorList>
            <consortium name="US DOE Joint Genome Institute"/>
            <person name="Copeland A."/>
            <person name="Lucas S."/>
            <person name="Lapidus A."/>
            <person name="Barry K."/>
            <person name="Detter J.C."/>
            <person name="Glavina del Rio T."/>
            <person name="Hammon N."/>
            <person name="Israni S."/>
            <person name="Pitluck S."/>
            <person name="Lowry S."/>
            <person name="Clum A."/>
            <person name="Schmutz J."/>
            <person name="Larimer F."/>
            <person name="Land M."/>
            <person name="Hauser L."/>
            <person name="Kyrpides N."/>
            <person name="Kim E."/>
            <person name="Ritalahti K.M."/>
            <person name="Loeffler F."/>
            <person name="Richardson P."/>
        </authorList>
    </citation>
    <scope>NUCLEOTIDE SEQUENCE [LARGE SCALE GENOMIC DNA]</scope>
    <source>
        <strain>ATCC BAA-2100 / JCM 16839 / KCTC 5957 / BAV1</strain>
    </source>
</reference>
<feature type="chain" id="PRO_1000086238" description="Small ribosomal subunit protein uS13">
    <location>
        <begin position="1"/>
        <end position="129"/>
    </location>
</feature>
<feature type="region of interest" description="Disordered" evidence="2">
    <location>
        <begin position="95"/>
        <end position="129"/>
    </location>
</feature>
<feature type="compositionally biased region" description="Basic residues" evidence="2">
    <location>
        <begin position="95"/>
        <end position="114"/>
    </location>
</feature>
<dbReference type="EMBL" id="CP000688">
    <property type="protein sequence ID" value="ABQ17061.1"/>
    <property type="molecule type" value="Genomic_DNA"/>
</dbReference>
<dbReference type="SMR" id="A5FRW9"/>
<dbReference type="KEGG" id="deb:DehaBAV1_0476"/>
<dbReference type="PATRIC" id="fig|216389.18.peg.519"/>
<dbReference type="HOGENOM" id="CLU_103849_1_2_0"/>
<dbReference type="GO" id="GO:0005829">
    <property type="term" value="C:cytosol"/>
    <property type="evidence" value="ECO:0007669"/>
    <property type="project" value="TreeGrafter"/>
</dbReference>
<dbReference type="GO" id="GO:0015935">
    <property type="term" value="C:small ribosomal subunit"/>
    <property type="evidence" value="ECO:0007669"/>
    <property type="project" value="TreeGrafter"/>
</dbReference>
<dbReference type="GO" id="GO:0019843">
    <property type="term" value="F:rRNA binding"/>
    <property type="evidence" value="ECO:0007669"/>
    <property type="project" value="UniProtKB-UniRule"/>
</dbReference>
<dbReference type="GO" id="GO:0003735">
    <property type="term" value="F:structural constituent of ribosome"/>
    <property type="evidence" value="ECO:0007669"/>
    <property type="project" value="InterPro"/>
</dbReference>
<dbReference type="GO" id="GO:0000049">
    <property type="term" value="F:tRNA binding"/>
    <property type="evidence" value="ECO:0007669"/>
    <property type="project" value="UniProtKB-UniRule"/>
</dbReference>
<dbReference type="GO" id="GO:0006412">
    <property type="term" value="P:translation"/>
    <property type="evidence" value="ECO:0007669"/>
    <property type="project" value="UniProtKB-UniRule"/>
</dbReference>
<dbReference type="FunFam" id="1.10.8.50:FF:000001">
    <property type="entry name" value="30S ribosomal protein S13"/>
    <property type="match status" value="1"/>
</dbReference>
<dbReference type="FunFam" id="4.10.910.10:FF:000001">
    <property type="entry name" value="30S ribosomal protein S13"/>
    <property type="match status" value="1"/>
</dbReference>
<dbReference type="Gene3D" id="1.10.8.50">
    <property type="match status" value="1"/>
</dbReference>
<dbReference type="Gene3D" id="4.10.910.10">
    <property type="entry name" value="30s ribosomal protein s13, domain 2"/>
    <property type="match status" value="1"/>
</dbReference>
<dbReference type="HAMAP" id="MF_01315">
    <property type="entry name" value="Ribosomal_uS13"/>
    <property type="match status" value="1"/>
</dbReference>
<dbReference type="InterPro" id="IPR027437">
    <property type="entry name" value="Rbsml_uS13_C"/>
</dbReference>
<dbReference type="InterPro" id="IPR001892">
    <property type="entry name" value="Ribosomal_uS13"/>
</dbReference>
<dbReference type="InterPro" id="IPR010979">
    <property type="entry name" value="Ribosomal_uS13-like_H2TH"/>
</dbReference>
<dbReference type="InterPro" id="IPR019980">
    <property type="entry name" value="Ribosomal_uS13_bac-type"/>
</dbReference>
<dbReference type="InterPro" id="IPR018269">
    <property type="entry name" value="Ribosomal_uS13_CS"/>
</dbReference>
<dbReference type="NCBIfam" id="TIGR03631">
    <property type="entry name" value="uS13_bact"/>
    <property type="match status" value="1"/>
</dbReference>
<dbReference type="PANTHER" id="PTHR10871">
    <property type="entry name" value="30S RIBOSOMAL PROTEIN S13/40S RIBOSOMAL PROTEIN S18"/>
    <property type="match status" value="1"/>
</dbReference>
<dbReference type="PANTHER" id="PTHR10871:SF1">
    <property type="entry name" value="SMALL RIBOSOMAL SUBUNIT PROTEIN US13M"/>
    <property type="match status" value="1"/>
</dbReference>
<dbReference type="Pfam" id="PF00416">
    <property type="entry name" value="Ribosomal_S13"/>
    <property type="match status" value="1"/>
</dbReference>
<dbReference type="PIRSF" id="PIRSF002134">
    <property type="entry name" value="Ribosomal_S13"/>
    <property type="match status" value="1"/>
</dbReference>
<dbReference type="SUPFAM" id="SSF46946">
    <property type="entry name" value="S13-like H2TH domain"/>
    <property type="match status" value="1"/>
</dbReference>
<dbReference type="PROSITE" id="PS00646">
    <property type="entry name" value="RIBOSOMAL_S13_1"/>
    <property type="match status" value="1"/>
</dbReference>
<dbReference type="PROSITE" id="PS50159">
    <property type="entry name" value="RIBOSOMAL_S13_2"/>
    <property type="match status" value="1"/>
</dbReference>
<protein>
    <recommendedName>
        <fullName evidence="1">Small ribosomal subunit protein uS13</fullName>
    </recommendedName>
    <alternativeName>
        <fullName evidence="3">30S ribosomal protein S13</fullName>
    </alternativeName>
</protein>
<sequence>MVRIAGTDIPDNKQVYFSLQYIFGIGPARSEKVLVQAGVDKTIRVNKLTDEEINRLREIIDKEYRVEGDLRKEITLNIKRLIDIGCYRGIRHKHNLPVRGQRTKTNARTRRGPRKTVAGRGQKRGATKK</sequence>
<name>RS13_DEHMB</name>
<comment type="function">
    <text evidence="1">Located at the top of the head of the 30S subunit, it contacts several helices of the 16S rRNA. In the 70S ribosome it contacts the 23S rRNA (bridge B1a) and protein L5 of the 50S subunit (bridge B1b), connecting the 2 subunits; these bridges are implicated in subunit movement. Contacts the tRNAs in the A and P-sites.</text>
</comment>
<comment type="subunit">
    <text evidence="1">Part of the 30S ribosomal subunit. Forms a loose heterodimer with protein S19. Forms two bridges to the 50S subunit in the 70S ribosome.</text>
</comment>
<comment type="similarity">
    <text evidence="1">Belongs to the universal ribosomal protein uS13 family.</text>
</comment>